<keyword id="KW-1185">Reference proteome</keyword>
<keyword id="KW-0687">Ribonucleoprotein</keyword>
<keyword id="KW-0689">Ribosomal protein</keyword>
<name>RL29_PSEPK</name>
<evidence type="ECO:0000255" key="1">
    <source>
        <dbReference type="HAMAP-Rule" id="MF_00374"/>
    </source>
</evidence>
<evidence type="ECO:0000305" key="2"/>
<protein>
    <recommendedName>
        <fullName evidence="1">Large ribosomal subunit protein uL29</fullName>
    </recommendedName>
    <alternativeName>
        <fullName evidence="2">50S ribosomal protein L29</fullName>
    </alternativeName>
</protein>
<sequence>MMKANELREKSAQQLNEQLLGLLRDQFNLRMQKATGQLGQSHLLSQVKRDIARVKTVLNQQAGK</sequence>
<dbReference type="EMBL" id="AE015451">
    <property type="protein sequence ID" value="AAN66092.1"/>
    <property type="molecule type" value="Genomic_DNA"/>
</dbReference>
<dbReference type="RefSeq" id="NP_742628.3">
    <property type="nucleotide sequence ID" value="NC_002947.4"/>
</dbReference>
<dbReference type="SMR" id="Q88QM7"/>
<dbReference type="STRING" id="160488.PP_0462"/>
<dbReference type="PaxDb" id="160488-PP_0462"/>
<dbReference type="KEGG" id="ppu:PP_0462"/>
<dbReference type="PATRIC" id="fig|160488.4.peg.494"/>
<dbReference type="eggNOG" id="COG0255">
    <property type="taxonomic scope" value="Bacteria"/>
</dbReference>
<dbReference type="HOGENOM" id="CLU_158491_1_2_6"/>
<dbReference type="OrthoDB" id="9815192at2"/>
<dbReference type="PhylomeDB" id="Q88QM7"/>
<dbReference type="BioCyc" id="PPUT160488:G1G01-508-MONOMER"/>
<dbReference type="Proteomes" id="UP000000556">
    <property type="component" value="Chromosome"/>
</dbReference>
<dbReference type="GO" id="GO:0022625">
    <property type="term" value="C:cytosolic large ribosomal subunit"/>
    <property type="evidence" value="ECO:0007669"/>
    <property type="project" value="TreeGrafter"/>
</dbReference>
<dbReference type="GO" id="GO:0003735">
    <property type="term" value="F:structural constituent of ribosome"/>
    <property type="evidence" value="ECO:0007669"/>
    <property type="project" value="InterPro"/>
</dbReference>
<dbReference type="GO" id="GO:0006412">
    <property type="term" value="P:translation"/>
    <property type="evidence" value="ECO:0007669"/>
    <property type="project" value="UniProtKB-UniRule"/>
</dbReference>
<dbReference type="CDD" id="cd00427">
    <property type="entry name" value="Ribosomal_L29_HIP"/>
    <property type="match status" value="1"/>
</dbReference>
<dbReference type="FunFam" id="1.10.287.310:FF:000001">
    <property type="entry name" value="50S ribosomal protein L29"/>
    <property type="match status" value="1"/>
</dbReference>
<dbReference type="Gene3D" id="1.10.287.310">
    <property type="match status" value="1"/>
</dbReference>
<dbReference type="HAMAP" id="MF_00374">
    <property type="entry name" value="Ribosomal_uL29"/>
    <property type="match status" value="1"/>
</dbReference>
<dbReference type="InterPro" id="IPR050063">
    <property type="entry name" value="Ribosomal_protein_uL29"/>
</dbReference>
<dbReference type="InterPro" id="IPR001854">
    <property type="entry name" value="Ribosomal_uL29"/>
</dbReference>
<dbReference type="InterPro" id="IPR018254">
    <property type="entry name" value="Ribosomal_uL29_CS"/>
</dbReference>
<dbReference type="InterPro" id="IPR036049">
    <property type="entry name" value="Ribosomal_uL29_sf"/>
</dbReference>
<dbReference type="NCBIfam" id="TIGR00012">
    <property type="entry name" value="L29"/>
    <property type="match status" value="1"/>
</dbReference>
<dbReference type="PANTHER" id="PTHR10916">
    <property type="entry name" value="60S RIBOSOMAL PROTEIN L35/50S RIBOSOMAL PROTEIN L29"/>
    <property type="match status" value="1"/>
</dbReference>
<dbReference type="PANTHER" id="PTHR10916:SF0">
    <property type="entry name" value="LARGE RIBOSOMAL SUBUNIT PROTEIN UL29C"/>
    <property type="match status" value="1"/>
</dbReference>
<dbReference type="Pfam" id="PF00831">
    <property type="entry name" value="Ribosomal_L29"/>
    <property type="match status" value="1"/>
</dbReference>
<dbReference type="SUPFAM" id="SSF46561">
    <property type="entry name" value="Ribosomal protein L29 (L29p)"/>
    <property type="match status" value="1"/>
</dbReference>
<dbReference type="PROSITE" id="PS00579">
    <property type="entry name" value="RIBOSOMAL_L29"/>
    <property type="match status" value="1"/>
</dbReference>
<proteinExistence type="inferred from homology"/>
<comment type="similarity">
    <text evidence="1">Belongs to the universal ribosomal protein uL29 family.</text>
</comment>
<reference key="1">
    <citation type="journal article" date="2002" name="Environ. Microbiol.">
        <title>Complete genome sequence and comparative analysis of the metabolically versatile Pseudomonas putida KT2440.</title>
        <authorList>
            <person name="Nelson K.E."/>
            <person name="Weinel C."/>
            <person name="Paulsen I.T."/>
            <person name="Dodson R.J."/>
            <person name="Hilbert H."/>
            <person name="Martins dos Santos V.A.P."/>
            <person name="Fouts D.E."/>
            <person name="Gill S.R."/>
            <person name="Pop M."/>
            <person name="Holmes M."/>
            <person name="Brinkac L.M."/>
            <person name="Beanan M.J."/>
            <person name="DeBoy R.T."/>
            <person name="Daugherty S.C."/>
            <person name="Kolonay J.F."/>
            <person name="Madupu R."/>
            <person name="Nelson W.C."/>
            <person name="White O."/>
            <person name="Peterson J.D."/>
            <person name="Khouri H.M."/>
            <person name="Hance I."/>
            <person name="Chris Lee P."/>
            <person name="Holtzapple E.K."/>
            <person name="Scanlan D."/>
            <person name="Tran K."/>
            <person name="Moazzez A."/>
            <person name="Utterback T.R."/>
            <person name="Rizzo M."/>
            <person name="Lee K."/>
            <person name="Kosack D."/>
            <person name="Moestl D."/>
            <person name="Wedler H."/>
            <person name="Lauber J."/>
            <person name="Stjepandic D."/>
            <person name="Hoheisel J."/>
            <person name="Straetz M."/>
            <person name="Heim S."/>
            <person name="Kiewitz C."/>
            <person name="Eisen J.A."/>
            <person name="Timmis K.N."/>
            <person name="Duesterhoeft A."/>
            <person name="Tuemmler B."/>
            <person name="Fraser C.M."/>
        </authorList>
    </citation>
    <scope>NUCLEOTIDE SEQUENCE [LARGE SCALE GENOMIC DNA]</scope>
    <source>
        <strain>ATCC 47054 / DSM 6125 / CFBP 8728 / NCIMB 11950 / KT2440</strain>
    </source>
</reference>
<gene>
    <name evidence="1" type="primary">rpmC</name>
    <name type="ordered locus">PP_0462</name>
</gene>
<organism>
    <name type="scientific">Pseudomonas putida (strain ATCC 47054 / DSM 6125 / CFBP 8728 / NCIMB 11950 / KT2440)</name>
    <dbReference type="NCBI Taxonomy" id="160488"/>
    <lineage>
        <taxon>Bacteria</taxon>
        <taxon>Pseudomonadati</taxon>
        <taxon>Pseudomonadota</taxon>
        <taxon>Gammaproteobacteria</taxon>
        <taxon>Pseudomonadales</taxon>
        <taxon>Pseudomonadaceae</taxon>
        <taxon>Pseudomonas</taxon>
    </lineage>
</organism>
<accession>Q88QM7</accession>
<feature type="chain" id="PRO_0000130438" description="Large ribosomal subunit protein uL29">
    <location>
        <begin position="1"/>
        <end position="64"/>
    </location>
</feature>